<comment type="function">
    <text evidence="1">Catalyzes the dephosphorylation of undecaprenyl diphosphate (UPP). Confers resistance to bacitracin.</text>
</comment>
<comment type="catalytic activity">
    <reaction evidence="1">
        <text>di-trans,octa-cis-undecaprenyl diphosphate + H2O = di-trans,octa-cis-undecaprenyl phosphate + phosphate + H(+)</text>
        <dbReference type="Rhea" id="RHEA:28094"/>
        <dbReference type="ChEBI" id="CHEBI:15377"/>
        <dbReference type="ChEBI" id="CHEBI:15378"/>
        <dbReference type="ChEBI" id="CHEBI:43474"/>
        <dbReference type="ChEBI" id="CHEBI:58405"/>
        <dbReference type="ChEBI" id="CHEBI:60392"/>
        <dbReference type="EC" id="3.6.1.27"/>
    </reaction>
</comment>
<comment type="subcellular location">
    <subcellularLocation>
        <location evidence="1">Cell membrane</location>
        <topology evidence="1">Multi-pass membrane protein</topology>
    </subcellularLocation>
</comment>
<comment type="miscellaneous">
    <text>Bacitracin is thought to be involved in the inhibition of peptidoglycan synthesis by sequestering undecaprenyl diphosphate, thereby reducing the pool of lipid carrier available.</text>
</comment>
<comment type="similarity">
    <text evidence="1">Belongs to the UppP family.</text>
</comment>
<feature type="chain" id="PRO_1000197378" description="Undecaprenyl-diphosphatase">
    <location>
        <begin position="1"/>
        <end position="276"/>
    </location>
</feature>
<feature type="transmembrane region" description="Helical" evidence="1">
    <location>
        <begin position="2"/>
        <end position="22"/>
    </location>
</feature>
<feature type="transmembrane region" description="Helical" evidence="1">
    <location>
        <begin position="43"/>
        <end position="63"/>
    </location>
</feature>
<feature type="transmembrane region" description="Helical" evidence="1">
    <location>
        <begin position="83"/>
        <end position="103"/>
    </location>
</feature>
<feature type="transmembrane region" description="Helical" evidence="1">
    <location>
        <begin position="111"/>
        <end position="131"/>
    </location>
</feature>
<feature type="transmembrane region" description="Helical" evidence="1">
    <location>
        <begin position="147"/>
        <end position="167"/>
    </location>
</feature>
<feature type="transmembrane region" description="Helical" evidence="1">
    <location>
        <begin position="186"/>
        <end position="206"/>
    </location>
</feature>
<feature type="transmembrane region" description="Helical" evidence="1">
    <location>
        <begin position="224"/>
        <end position="244"/>
    </location>
</feature>
<feature type="transmembrane region" description="Helical" evidence="1">
    <location>
        <begin position="255"/>
        <end position="275"/>
    </location>
</feature>
<protein>
    <recommendedName>
        <fullName evidence="1">Undecaprenyl-diphosphatase</fullName>
        <ecNumber evidence="1">3.6.1.27</ecNumber>
    </recommendedName>
    <alternativeName>
        <fullName evidence="1">Bacitracin resistance protein</fullName>
    </alternativeName>
    <alternativeName>
        <fullName evidence="1">Undecaprenyl pyrophosphate phosphatase</fullName>
    </alternativeName>
</protein>
<sequence length="276" mass="30754">MLEILKAVILGIVEGITEFLPISSTGHLVLVDEFIKLNEPKKFIDMFNVVIQLGAIMAVVVLYFHKLNPWSPKKSRLERSQTWTLWKKVIIAVIPSVIIGLPLNDWMDAHLMNWLVVSIALIVYGVLFIVIENHNQNLRPRFDSLNTLPYKVAILIGCFQILSLIPGTSRSGATILGAILIGTSRYVAAEFSFFLAIPTMFGASLLKLYKFFAHGGTLAGNQGLILAVGVIVSFVVAYASIRFLLNYIKTKDFKAFGWYRIILGVIVIAYFALLAH</sequence>
<reference key="1">
    <citation type="journal article" date="2008" name="DNA Res.">
        <title>Comparative genome analysis of Lactobacillus reuteri and Lactobacillus fermentum reveal a genomic island for reuterin and cobalamin production.</title>
        <authorList>
            <person name="Morita H."/>
            <person name="Toh H."/>
            <person name="Fukuda S."/>
            <person name="Horikawa H."/>
            <person name="Oshima K."/>
            <person name="Suzuki T."/>
            <person name="Murakami M."/>
            <person name="Hisamatsu S."/>
            <person name="Kato Y."/>
            <person name="Takizawa T."/>
            <person name="Fukuoka H."/>
            <person name="Yoshimura T."/>
            <person name="Itoh K."/>
            <person name="O'Sullivan D.J."/>
            <person name="McKay L.L."/>
            <person name="Ohno H."/>
            <person name="Kikuchi J."/>
            <person name="Masaoka T."/>
            <person name="Hattori M."/>
        </authorList>
    </citation>
    <scope>NUCLEOTIDE SEQUENCE [LARGE SCALE GENOMIC DNA]</scope>
    <source>
        <strain>NBRC 3956 / LMG 18251</strain>
    </source>
</reference>
<proteinExistence type="inferred from homology"/>
<name>UPPP_LIMF3</name>
<dbReference type="EC" id="3.6.1.27" evidence="1"/>
<dbReference type="EMBL" id="AP008937">
    <property type="protein sequence ID" value="BAG27870.1"/>
    <property type="molecule type" value="Genomic_DNA"/>
</dbReference>
<dbReference type="RefSeq" id="WP_004562945.1">
    <property type="nucleotide sequence ID" value="NC_010610.1"/>
</dbReference>
<dbReference type="SMR" id="B2GDY8"/>
<dbReference type="KEGG" id="lfe:LAF_1534"/>
<dbReference type="eggNOG" id="COG1968">
    <property type="taxonomic scope" value="Bacteria"/>
</dbReference>
<dbReference type="HOGENOM" id="CLU_060296_2_0_9"/>
<dbReference type="Proteomes" id="UP000001697">
    <property type="component" value="Chromosome"/>
</dbReference>
<dbReference type="GO" id="GO:0005886">
    <property type="term" value="C:plasma membrane"/>
    <property type="evidence" value="ECO:0007669"/>
    <property type="project" value="UniProtKB-SubCell"/>
</dbReference>
<dbReference type="GO" id="GO:0050380">
    <property type="term" value="F:undecaprenyl-diphosphatase activity"/>
    <property type="evidence" value="ECO:0007669"/>
    <property type="project" value="UniProtKB-UniRule"/>
</dbReference>
<dbReference type="GO" id="GO:0071555">
    <property type="term" value="P:cell wall organization"/>
    <property type="evidence" value="ECO:0007669"/>
    <property type="project" value="UniProtKB-KW"/>
</dbReference>
<dbReference type="GO" id="GO:0009252">
    <property type="term" value="P:peptidoglycan biosynthetic process"/>
    <property type="evidence" value="ECO:0007669"/>
    <property type="project" value="UniProtKB-KW"/>
</dbReference>
<dbReference type="GO" id="GO:0008360">
    <property type="term" value="P:regulation of cell shape"/>
    <property type="evidence" value="ECO:0007669"/>
    <property type="project" value="UniProtKB-KW"/>
</dbReference>
<dbReference type="GO" id="GO:0046677">
    <property type="term" value="P:response to antibiotic"/>
    <property type="evidence" value="ECO:0007669"/>
    <property type="project" value="UniProtKB-UniRule"/>
</dbReference>
<dbReference type="HAMAP" id="MF_01006">
    <property type="entry name" value="Undec_diphosphatase"/>
    <property type="match status" value="1"/>
</dbReference>
<dbReference type="InterPro" id="IPR003824">
    <property type="entry name" value="UppP"/>
</dbReference>
<dbReference type="NCBIfam" id="NF001389">
    <property type="entry name" value="PRK00281.1-2"/>
    <property type="match status" value="1"/>
</dbReference>
<dbReference type="NCBIfam" id="NF001390">
    <property type="entry name" value="PRK00281.1-4"/>
    <property type="match status" value="1"/>
</dbReference>
<dbReference type="NCBIfam" id="NF001391">
    <property type="entry name" value="PRK00281.1-5"/>
    <property type="match status" value="1"/>
</dbReference>
<dbReference type="NCBIfam" id="TIGR00753">
    <property type="entry name" value="undec_PP_bacA"/>
    <property type="match status" value="1"/>
</dbReference>
<dbReference type="PANTHER" id="PTHR30622">
    <property type="entry name" value="UNDECAPRENYL-DIPHOSPHATASE"/>
    <property type="match status" value="1"/>
</dbReference>
<dbReference type="PANTHER" id="PTHR30622:SF3">
    <property type="entry name" value="UNDECAPRENYL-DIPHOSPHATASE"/>
    <property type="match status" value="1"/>
</dbReference>
<dbReference type="Pfam" id="PF02673">
    <property type="entry name" value="BacA"/>
    <property type="match status" value="1"/>
</dbReference>
<keyword id="KW-0046">Antibiotic resistance</keyword>
<keyword id="KW-1003">Cell membrane</keyword>
<keyword id="KW-0133">Cell shape</keyword>
<keyword id="KW-0961">Cell wall biogenesis/degradation</keyword>
<keyword id="KW-0378">Hydrolase</keyword>
<keyword id="KW-0472">Membrane</keyword>
<keyword id="KW-0573">Peptidoglycan synthesis</keyword>
<keyword id="KW-1185">Reference proteome</keyword>
<keyword id="KW-0812">Transmembrane</keyword>
<keyword id="KW-1133">Transmembrane helix</keyword>
<gene>
    <name evidence="1" type="primary">uppP</name>
    <name type="ordered locus">LAF_1534</name>
</gene>
<organism>
    <name type="scientific">Limosilactobacillus fermentum (strain NBRC 3956 / LMG 18251)</name>
    <name type="common">Lactobacillus fermentum</name>
    <dbReference type="NCBI Taxonomy" id="334390"/>
    <lineage>
        <taxon>Bacteria</taxon>
        <taxon>Bacillati</taxon>
        <taxon>Bacillota</taxon>
        <taxon>Bacilli</taxon>
        <taxon>Lactobacillales</taxon>
        <taxon>Lactobacillaceae</taxon>
        <taxon>Limosilactobacillus</taxon>
    </lineage>
</organism>
<evidence type="ECO:0000255" key="1">
    <source>
        <dbReference type="HAMAP-Rule" id="MF_01006"/>
    </source>
</evidence>
<accession>B2GDY8</accession>